<organism>
    <name type="scientific">Saccharomyces cerevisiae (strain ATCC 204508 / S288c)</name>
    <name type="common">Baker's yeast</name>
    <dbReference type="NCBI Taxonomy" id="559292"/>
    <lineage>
        <taxon>Eukaryota</taxon>
        <taxon>Fungi</taxon>
        <taxon>Dikarya</taxon>
        <taxon>Ascomycota</taxon>
        <taxon>Saccharomycotina</taxon>
        <taxon>Saccharomycetes</taxon>
        <taxon>Saccharomycetales</taxon>
        <taxon>Saccharomycetaceae</taxon>
        <taxon>Saccharomyces</taxon>
    </lineage>
</organism>
<sequence length="602" mass="67257">MKNLSFLINRRKENTSDSNVYPGKAKSHEPSWIEMDDQTKKDGLDIVHVEFSPDTRAPSDSNKVITEIFDATEDAKEADESERGMPLATALNTYPKAAAWSLLVSTTLIMEGYDTAILGAFYALPIFQRKFGSQNDKTGEWEISASWQIGLTLCYMAGEIVGLQLTGPSVDLVGNRYTLIIALFFLAAFTFILYFCNSLGMIAVGQALCGMPWGCFQCLTVSYASEICPLALRYYLTTYSNLCWLFGQLFAAGIMKNSQKKYADSELGYKLPFALQWILPVPLALGIFFAPESPWWLVKKGRFDEARRSLRRTLSGKGPEKEILVTLEVDKIKVTIDKEKRLTSKEGSYSDCFEDKINRRRTRITCLCWAGQATCGSILIGYSTYFYEKAGVSTEMSFTFSIIQYCLGICATFLSWWASKYFGRYDLYAFGLAFQTIVFFIIGGLGCSSTHGSKMGSGSLLMAVAFFYNLGIAPVVFCLVSEMPSSRLRTKTIILARNTYNVVSIICSVLILYQLNSKKWNWGAKSGFFWGVLCFCTLIWAVVDLPETAGKTFVEINELFKLGVSARKFKSTKVDPFVVKTPPKDVSHNDPKGDIEASIAEE</sequence>
<name>MPH3_YEAST</name>
<comment type="function">
    <text evidence="4 5">High-affinity uptake of maltose and maltotriose. Also transports alpha-methylglucoside, glucose and turanose but not melezitose or trehalose.</text>
</comment>
<comment type="subcellular location">
    <subcellularLocation>
        <location evidence="1">Cell membrane</location>
        <topology>Multi-pass membrane protein</topology>
    </subcellularLocation>
</comment>
<comment type="induction">
    <text evidence="5">By maltose and maltotriose. Repressed by glucose.</text>
</comment>
<comment type="similarity">
    <text evidence="6">Belongs to the major facilitator superfamily. Sugar transporter (TC 2.A.1.1) family.</text>
</comment>
<protein>
    <recommendedName>
        <fullName>Alpha-glucosides permease MPH3</fullName>
    </recommendedName>
    <alternativeName>
        <fullName>Maltose transport protein 3</fullName>
    </alternativeName>
</protein>
<accession>P0CE00</accession>
<accession>D6VWX8</accession>
<accession>P47186</accession>
<accession>Q07787</accession>
<feature type="chain" id="PRO_0000391710" description="Alpha-glucosides permease MPH3">
    <location>
        <begin position="1"/>
        <end position="602"/>
    </location>
</feature>
<feature type="topological domain" description="Cytoplasmic" evidence="2">
    <location>
        <begin position="1"/>
        <end position="106"/>
    </location>
</feature>
<feature type="transmembrane region" description="Helical; Name=1" evidence="2">
    <location>
        <begin position="107"/>
        <end position="127"/>
    </location>
</feature>
<feature type="topological domain" description="Extracellular" evidence="2">
    <location>
        <begin position="128"/>
        <end position="142"/>
    </location>
</feature>
<feature type="transmembrane region" description="Helical; Name=2" evidence="2">
    <location>
        <begin position="143"/>
        <end position="163"/>
    </location>
</feature>
<feature type="topological domain" description="Cytoplasmic" evidence="2">
    <location>
        <begin position="164"/>
        <end position="178"/>
    </location>
</feature>
<feature type="transmembrane region" description="Helical; Name=3" evidence="2">
    <location>
        <begin position="179"/>
        <end position="199"/>
    </location>
</feature>
<feature type="topological domain" description="Extracellular" evidence="2">
    <location>
        <position position="200"/>
    </location>
</feature>
<feature type="transmembrane region" description="Helical; Name=4" evidence="2">
    <location>
        <begin position="201"/>
        <end position="221"/>
    </location>
</feature>
<feature type="topological domain" description="Cytoplasmic" evidence="2">
    <location>
        <begin position="222"/>
        <end position="234"/>
    </location>
</feature>
<feature type="transmembrane region" description="Helical; Name=5" evidence="2">
    <location>
        <begin position="235"/>
        <end position="255"/>
    </location>
</feature>
<feature type="topological domain" description="Extracellular" evidence="2">
    <location>
        <begin position="256"/>
        <end position="270"/>
    </location>
</feature>
<feature type="transmembrane region" description="Helical; Name=6" evidence="2">
    <location>
        <begin position="271"/>
        <end position="291"/>
    </location>
</feature>
<feature type="topological domain" description="Cytoplasmic" evidence="2">
    <location>
        <begin position="292"/>
        <end position="363"/>
    </location>
</feature>
<feature type="transmembrane region" description="Helical; Name=7" evidence="2">
    <location>
        <begin position="364"/>
        <end position="384"/>
    </location>
</feature>
<feature type="topological domain" description="Extracellular" evidence="2">
    <location>
        <begin position="385"/>
        <end position="397"/>
    </location>
</feature>
<feature type="transmembrane region" description="Helical; Name=8" evidence="2">
    <location>
        <begin position="398"/>
        <end position="418"/>
    </location>
</feature>
<feature type="topological domain" description="Cytoplasmic" evidence="2">
    <location>
        <begin position="419"/>
        <end position="426"/>
    </location>
</feature>
<feature type="transmembrane region" description="Helical; Name=9" evidence="2">
    <location>
        <begin position="427"/>
        <end position="447"/>
    </location>
</feature>
<feature type="topological domain" description="Extracellular" evidence="2">
    <location>
        <begin position="448"/>
        <end position="459"/>
    </location>
</feature>
<feature type="transmembrane region" description="Helical; Name=10" evidence="2">
    <location>
        <begin position="460"/>
        <end position="480"/>
    </location>
</feature>
<feature type="topological domain" description="Cytoplasmic" evidence="2">
    <location>
        <begin position="481"/>
        <end position="492"/>
    </location>
</feature>
<feature type="transmembrane region" description="Helical; Name=11" evidence="2">
    <location>
        <begin position="493"/>
        <end position="513"/>
    </location>
</feature>
<feature type="topological domain" description="Extracellular" evidence="2">
    <location>
        <begin position="514"/>
        <end position="525"/>
    </location>
</feature>
<feature type="transmembrane region" description="Helical; Name=12" evidence="2">
    <location>
        <begin position="526"/>
        <end position="546"/>
    </location>
</feature>
<feature type="topological domain" description="Cytoplasmic" evidence="2">
    <location>
        <begin position="547"/>
        <end position="602"/>
    </location>
</feature>
<feature type="region of interest" description="Disordered" evidence="3">
    <location>
        <begin position="582"/>
        <end position="602"/>
    </location>
</feature>
<feature type="compositionally biased region" description="Basic and acidic residues" evidence="3">
    <location>
        <begin position="582"/>
        <end position="595"/>
    </location>
</feature>
<gene>
    <name type="primary">MPH3</name>
    <name type="ordered locus">YJR160C</name>
    <name type="ORF">J2400</name>
</gene>
<proteinExistence type="evidence at protein level"/>
<evidence type="ECO:0000250" key="1"/>
<evidence type="ECO:0000255" key="2"/>
<evidence type="ECO:0000256" key="3">
    <source>
        <dbReference type="SAM" id="MobiDB-lite"/>
    </source>
</evidence>
<evidence type="ECO:0000269" key="4">
    <source>
    </source>
</evidence>
<evidence type="ECO:0000269" key="5">
    <source>
    </source>
</evidence>
<evidence type="ECO:0000305" key="6"/>
<keyword id="KW-1003">Cell membrane</keyword>
<keyword id="KW-0462">Maltose metabolism</keyword>
<keyword id="KW-0472">Membrane</keyword>
<keyword id="KW-1185">Reference proteome</keyword>
<keyword id="KW-0762">Sugar transport</keyword>
<keyword id="KW-0812">Transmembrane</keyword>
<keyword id="KW-1133">Transmembrane helix</keyword>
<keyword id="KW-0813">Transport</keyword>
<dbReference type="EMBL" id="Z49660">
    <property type="protein sequence ID" value="CAA89693.1"/>
    <property type="molecule type" value="Genomic_DNA"/>
</dbReference>
<dbReference type="EMBL" id="BK006943">
    <property type="protein sequence ID" value="DAA08944.1"/>
    <property type="molecule type" value="Genomic_DNA"/>
</dbReference>
<dbReference type="PIR" id="S57190">
    <property type="entry name" value="S57190"/>
</dbReference>
<dbReference type="RefSeq" id="NP_012694.1">
    <property type="nucleotide sequence ID" value="NM_001181818.1"/>
</dbReference>
<dbReference type="SMR" id="P0CE00"/>
<dbReference type="BioGRID" id="33914">
    <property type="interactions" value="45"/>
</dbReference>
<dbReference type="DIP" id="DIP-7569N"/>
<dbReference type="FunCoup" id="P0CE00">
    <property type="interactions" value="45"/>
</dbReference>
<dbReference type="IntAct" id="P0CE00">
    <property type="interactions" value="1"/>
</dbReference>
<dbReference type="STRING" id="4932.YJR160C"/>
<dbReference type="PaxDb" id="4932-YJR160C"/>
<dbReference type="EnsemblFungi" id="YJR160C_mRNA">
    <property type="protein sequence ID" value="YJR160C"/>
    <property type="gene ID" value="YJR160C"/>
</dbReference>
<dbReference type="GeneID" id="853625"/>
<dbReference type="KEGG" id="sce:YJR160C"/>
<dbReference type="AGR" id="SGD:S000003921"/>
<dbReference type="SGD" id="S000003921">
    <property type="gene designation" value="MPH3"/>
</dbReference>
<dbReference type="VEuPathDB" id="FungiDB:YJR160C"/>
<dbReference type="eggNOG" id="KOG0254">
    <property type="taxonomic scope" value="Eukaryota"/>
</dbReference>
<dbReference type="GeneTree" id="ENSGT00940000176341"/>
<dbReference type="HOGENOM" id="CLU_001265_11_5_1"/>
<dbReference type="InParanoid" id="P0CE00"/>
<dbReference type="OMA" id="LDKEHSM"/>
<dbReference type="OrthoDB" id="6612291at2759"/>
<dbReference type="BioCyc" id="YEAST:G3O-31769-MONOMER"/>
<dbReference type="PRO" id="PR:P0CE00"/>
<dbReference type="Proteomes" id="UP000002311">
    <property type="component" value="Chromosome X"/>
</dbReference>
<dbReference type="RNAct" id="P0CE00">
    <property type="molecule type" value="protein"/>
</dbReference>
<dbReference type="GO" id="GO:0071944">
    <property type="term" value="C:cell periphery"/>
    <property type="evidence" value="ECO:0007005"/>
    <property type="project" value="SGD"/>
</dbReference>
<dbReference type="GO" id="GO:0000324">
    <property type="term" value="C:fungal-type vacuole"/>
    <property type="evidence" value="ECO:0007005"/>
    <property type="project" value="SGD"/>
</dbReference>
<dbReference type="GO" id="GO:0016020">
    <property type="term" value="C:membrane"/>
    <property type="evidence" value="ECO:0000318"/>
    <property type="project" value="GO_Central"/>
</dbReference>
<dbReference type="GO" id="GO:0005886">
    <property type="term" value="C:plasma membrane"/>
    <property type="evidence" value="ECO:0007669"/>
    <property type="project" value="UniProtKB-SubCell"/>
</dbReference>
<dbReference type="GO" id="GO:0015151">
    <property type="term" value="F:alpha-glucoside transmembrane transporter activity"/>
    <property type="evidence" value="ECO:0000314"/>
    <property type="project" value="UniProtKB"/>
</dbReference>
<dbReference type="GO" id="GO:0005351">
    <property type="term" value="F:carbohydrate:proton symporter activity"/>
    <property type="evidence" value="ECO:0000318"/>
    <property type="project" value="GO_Central"/>
</dbReference>
<dbReference type="GO" id="GO:0005363">
    <property type="term" value="F:maltose transmembrane transporter activity"/>
    <property type="evidence" value="ECO:0000250"/>
    <property type="project" value="SGD"/>
</dbReference>
<dbReference type="GO" id="GO:0000017">
    <property type="term" value="P:alpha-glucoside transport"/>
    <property type="evidence" value="ECO:0000314"/>
    <property type="project" value="UniProtKB"/>
</dbReference>
<dbReference type="GO" id="GO:0008643">
    <property type="term" value="P:carbohydrate transport"/>
    <property type="evidence" value="ECO:0000314"/>
    <property type="project" value="SGD"/>
</dbReference>
<dbReference type="GO" id="GO:0000023">
    <property type="term" value="P:maltose metabolic process"/>
    <property type="evidence" value="ECO:0007669"/>
    <property type="project" value="UniProtKB-KW"/>
</dbReference>
<dbReference type="FunFam" id="1.20.1250.20:FF:000254">
    <property type="entry name" value="MAL31p Maltose permease"/>
    <property type="match status" value="1"/>
</dbReference>
<dbReference type="Gene3D" id="1.20.1250.20">
    <property type="entry name" value="MFS general substrate transporter like domains"/>
    <property type="match status" value="1"/>
</dbReference>
<dbReference type="InterPro" id="IPR020846">
    <property type="entry name" value="MFS_dom"/>
</dbReference>
<dbReference type="InterPro" id="IPR005828">
    <property type="entry name" value="MFS_sugar_transport-like"/>
</dbReference>
<dbReference type="InterPro" id="IPR050360">
    <property type="entry name" value="MFS_Sugar_Transporters"/>
</dbReference>
<dbReference type="InterPro" id="IPR036259">
    <property type="entry name" value="MFS_trans_sf"/>
</dbReference>
<dbReference type="InterPro" id="IPR003663">
    <property type="entry name" value="Sugar/inositol_transpt"/>
</dbReference>
<dbReference type="InterPro" id="IPR005829">
    <property type="entry name" value="Sugar_transporter_CS"/>
</dbReference>
<dbReference type="NCBIfam" id="TIGR00879">
    <property type="entry name" value="SP"/>
    <property type="match status" value="1"/>
</dbReference>
<dbReference type="PANTHER" id="PTHR48022:SF5">
    <property type="entry name" value="ALPHA-GLUCOSIDES PERMEASE MPH2-RELATED"/>
    <property type="match status" value="1"/>
</dbReference>
<dbReference type="PANTHER" id="PTHR48022">
    <property type="entry name" value="PLASTIDIC GLUCOSE TRANSPORTER 4"/>
    <property type="match status" value="1"/>
</dbReference>
<dbReference type="Pfam" id="PF00083">
    <property type="entry name" value="Sugar_tr"/>
    <property type="match status" value="1"/>
</dbReference>
<dbReference type="SUPFAM" id="SSF103473">
    <property type="entry name" value="MFS general substrate transporter"/>
    <property type="match status" value="1"/>
</dbReference>
<dbReference type="PROSITE" id="PS50850">
    <property type="entry name" value="MFS"/>
    <property type="match status" value="1"/>
</dbReference>
<dbReference type="PROSITE" id="PS00217">
    <property type="entry name" value="SUGAR_TRANSPORT_2"/>
    <property type="match status" value="1"/>
</dbReference>
<reference key="1">
    <citation type="journal article" date="1996" name="EMBO J.">
        <title>Complete nucleotide sequence of Saccharomyces cerevisiae chromosome X.</title>
        <authorList>
            <person name="Galibert F."/>
            <person name="Alexandraki D."/>
            <person name="Baur A."/>
            <person name="Boles E."/>
            <person name="Chalwatzis N."/>
            <person name="Chuat J.-C."/>
            <person name="Coster F."/>
            <person name="Cziepluch C."/>
            <person name="de Haan M."/>
            <person name="Domdey H."/>
            <person name="Durand P."/>
            <person name="Entian K.-D."/>
            <person name="Gatius M."/>
            <person name="Goffeau A."/>
            <person name="Grivell L.A."/>
            <person name="Hennemann A."/>
            <person name="Herbert C.J."/>
            <person name="Heumann K."/>
            <person name="Hilger F."/>
            <person name="Hollenberg C.P."/>
            <person name="Huang M.-E."/>
            <person name="Jacq C."/>
            <person name="Jauniaux J.-C."/>
            <person name="Katsoulou C."/>
            <person name="Kirchrath L."/>
            <person name="Kleine K."/>
            <person name="Kordes E."/>
            <person name="Koetter P."/>
            <person name="Liebl S."/>
            <person name="Louis E.J."/>
            <person name="Manus V."/>
            <person name="Mewes H.-W."/>
            <person name="Miosga T."/>
            <person name="Obermaier B."/>
            <person name="Perea J."/>
            <person name="Pohl T.M."/>
            <person name="Portetelle D."/>
            <person name="Pujol A."/>
            <person name="Purnelle B."/>
            <person name="Ramezani Rad M."/>
            <person name="Rasmussen S.W."/>
            <person name="Rose M."/>
            <person name="Rossau R."/>
            <person name="Schaaff-Gerstenschlaeger I."/>
            <person name="Smits P.H.M."/>
            <person name="Scarcez T."/>
            <person name="Soriano N."/>
            <person name="To Van D."/>
            <person name="Tzermia M."/>
            <person name="Van Broekhoven A."/>
            <person name="Vandenbol M."/>
            <person name="Wedler H."/>
            <person name="von Wettstein D."/>
            <person name="Wambutt R."/>
            <person name="Zagulski M."/>
            <person name="Zollner A."/>
            <person name="Karpfinger-Hartl L."/>
        </authorList>
    </citation>
    <scope>NUCLEOTIDE SEQUENCE [LARGE SCALE GENOMIC DNA]</scope>
    <source>
        <strain>ATCC 204508 / S288c</strain>
    </source>
</reference>
<reference key="2">
    <citation type="journal article" date="2014" name="G3 (Bethesda)">
        <title>The reference genome sequence of Saccharomyces cerevisiae: Then and now.</title>
        <authorList>
            <person name="Engel S.R."/>
            <person name="Dietrich F.S."/>
            <person name="Fisk D.G."/>
            <person name="Binkley G."/>
            <person name="Balakrishnan R."/>
            <person name="Costanzo M.C."/>
            <person name="Dwight S.S."/>
            <person name="Hitz B.C."/>
            <person name="Karra K."/>
            <person name="Nash R.S."/>
            <person name="Weng S."/>
            <person name="Wong E.D."/>
            <person name="Lloyd P."/>
            <person name="Skrzypek M.S."/>
            <person name="Miyasato S.R."/>
            <person name="Simison M."/>
            <person name="Cherry J.M."/>
        </authorList>
    </citation>
    <scope>GENOME REANNOTATION</scope>
    <source>
        <strain>ATCC 204508 / S288c</strain>
    </source>
</reference>
<reference key="3">
    <citation type="journal article" date="1999" name="FEBS Lett.">
        <title>Concurrent knock-out of at least 20 transporter genes is required to block uptake of hexoses in Saccharomyces cerevisiae.</title>
        <authorList>
            <person name="Wieczorke R."/>
            <person name="Krampe S."/>
            <person name="Weierstall T."/>
            <person name="Freidel K."/>
            <person name="Hollenberg C.P."/>
            <person name="Boles E."/>
        </authorList>
    </citation>
    <scope>FUNCTION</scope>
</reference>
<reference key="4">
    <citation type="journal article" date="2002" name="Yeast">
        <title>Characterization of the putative maltose transporters encoded by YDL247w and YJR160c.</title>
        <authorList>
            <person name="Day R.E."/>
            <person name="Higgins V.J."/>
            <person name="Rogers P.J."/>
            <person name="Dawes I.W."/>
        </authorList>
    </citation>
    <scope>FUNCTION</scope>
    <scope>INDUCTION</scope>
</reference>
<reference key="5">
    <citation type="journal article" date="2006" name="Proc. Natl. Acad. Sci. U.S.A.">
        <title>A global topology map of the Saccharomyces cerevisiae membrane proteome.</title>
        <authorList>
            <person name="Kim H."/>
            <person name="Melen K."/>
            <person name="Oesterberg M."/>
            <person name="von Heijne G."/>
        </authorList>
    </citation>
    <scope>TOPOLOGY [LARGE SCALE ANALYSIS]</scope>
    <source>
        <strain>ATCC 208353 / W303-1A</strain>
    </source>
</reference>